<reference key="1">
    <citation type="journal article" date="1994" name="Mech. Dev.">
        <title>Cloning and expression during development of three murine members of the COUP family of nuclear orphan receptors.</title>
        <authorList>
            <person name="Jonk L.J.C."/>
            <person name="de Jonge M.E.J."/>
            <person name="Pals C.E.G.M."/>
            <person name="Wissink S."/>
            <person name="Vervaart J.M.A."/>
            <person name="Schoorlemmer J."/>
            <person name="Kruijer W."/>
        </authorList>
    </citation>
    <scope>NUCLEOTIDE SEQUENCE [MRNA]</scope>
    <scope>SUBCELLULAR LOCATION</scope>
</reference>
<reference key="2">
    <citation type="journal article" date="1994" name="Proc. Natl. Acad. Sci. U.S.A.">
        <title>Spatiotemporal expression patterns of chicken ovalbumin upstream promoter-transcription factors in the developing mouse central nervous system: evidence for a role in segmental patterning of the diencephalon.</title>
        <authorList>
            <person name="Qiu Y."/>
            <person name="Cooney A.J."/>
            <person name="Kuratani S."/>
            <person name="DeMayo F.J."/>
            <person name="Tsai S.Y."/>
            <person name="Tsai M.J."/>
        </authorList>
    </citation>
    <scope>NUCLEOTIDE SEQUENCE [MRNA]</scope>
    <source>
        <strain>BALB/cJ</strain>
    </source>
</reference>
<reference key="3">
    <citation type="journal article" date="2004" name="Genome Res.">
        <title>The status, quality, and expansion of the NIH full-length cDNA project: the Mammalian Gene Collection (MGC).</title>
        <authorList>
            <consortium name="The MGC Project Team"/>
        </authorList>
    </citation>
    <scope>NUCLEOTIDE SEQUENCE [LARGE SCALE MRNA]</scope>
    <source>
        <tissue>Eye</tissue>
    </source>
</reference>
<reference key="4">
    <citation type="journal article" date="2001" name="J. Biol. Chem.">
        <title>Friend of GATA 2 physically interacts with chicken ovalbumin upstream promoter-TF2 (COUP-TF2) and COUP-TF3 and represses COUP-TF2-dependent activation of the atrial natriuretic factor promoter.</title>
        <authorList>
            <person name="Huggins G.S."/>
            <person name="Bacani C.J."/>
            <person name="Boltax J."/>
            <person name="Aikawa R."/>
            <person name="Leiden J.M."/>
        </authorList>
    </citation>
    <scope>INTERACTION WITH ZFPM2</scope>
    <scope>MUTAGENESIS OF 363-LEU--LEU-367</scope>
</reference>
<reference key="5">
    <citation type="journal article" date="2017" name="Circ. Res.">
        <title>Polydom Is an Extracellular Matrix Protein Involved in Lymphatic Vessel Remodeling.</title>
        <authorList>
            <person name="Morooka N."/>
            <person name="Futaki S."/>
            <person name="Sato-Nishiuchi R."/>
            <person name="Nishino M."/>
            <person name="Totani Y."/>
            <person name="Shimono C."/>
            <person name="Nakano I."/>
            <person name="Nakajima H."/>
            <person name="Mochizuki N."/>
            <person name="Sekiguchi K."/>
        </authorList>
    </citation>
    <scope>DEVELOPMENTAL STAGE</scope>
</reference>
<feature type="chain" id="PRO_0000053607" description="COUP transcription factor 2">
    <location>
        <begin position="1"/>
        <end position="414"/>
    </location>
</feature>
<feature type="domain" description="NR LBD" evidence="4">
    <location>
        <begin position="177"/>
        <end position="403"/>
    </location>
</feature>
<feature type="DNA-binding region" description="Nuclear receptor" evidence="3">
    <location>
        <begin position="76"/>
        <end position="151"/>
    </location>
</feature>
<feature type="zinc finger region" description="NR C4-type" evidence="3">
    <location>
        <begin position="79"/>
        <end position="99"/>
    </location>
</feature>
<feature type="zinc finger region" description="NR C4-type" evidence="3">
    <location>
        <begin position="115"/>
        <end position="139"/>
    </location>
</feature>
<feature type="region of interest" description="Disordered" evidence="5">
    <location>
        <begin position="1"/>
        <end position="72"/>
    </location>
</feature>
<feature type="region of interest" description="Interaction with ZFPM2" evidence="6">
    <location>
        <begin position="117"/>
        <end position="414"/>
    </location>
</feature>
<feature type="region of interest" description="Important for dimerization">
    <location>
        <begin position="337"/>
        <end position="414"/>
    </location>
</feature>
<feature type="compositionally biased region" description="Pro residues" evidence="5">
    <location>
        <begin position="27"/>
        <end position="37"/>
    </location>
</feature>
<feature type="compositionally biased region" description="Low complexity" evidence="5">
    <location>
        <begin position="38"/>
        <end position="57"/>
    </location>
</feature>
<feature type="compositionally biased region" description="Gly residues" evidence="5">
    <location>
        <begin position="58"/>
        <end position="67"/>
    </location>
</feature>
<feature type="modified residue" description="Phosphothreonine" evidence="2">
    <location>
        <position position="51"/>
    </location>
</feature>
<feature type="mutagenesis site" description="Abolishes interaction with ZFPM2." evidence="6">
    <original>LLLRL</original>
    <variation>RSLRF</variation>
    <location>
        <begin position="363"/>
        <end position="367"/>
    </location>
</feature>
<feature type="sequence conflict" description="In Ref. 1; CAA54096." evidence="9" ref="1">
    <original>A</original>
    <variation>P</variation>
    <location>
        <position position="36"/>
    </location>
</feature>
<gene>
    <name type="primary">Nr2f2</name>
    <name type="synonym">Aporp1</name>
    <name type="synonym">Arp-1</name>
    <name type="synonym">Arp1</name>
    <name type="synonym">Tfcoup2</name>
</gene>
<protein>
    <recommendedName>
        <fullName>COUP transcription factor 2</fullName>
        <shortName>COUP-TF2</shortName>
    </recommendedName>
    <alternativeName>
        <fullName>Apolipoprotein AI regulatory protein 1</fullName>
        <shortName>ARP-1</shortName>
    </alternativeName>
    <alternativeName>
        <fullName>COUP transcription factor II</fullName>
        <shortName>COUP-TF II</shortName>
    </alternativeName>
    <alternativeName>
        <fullName>Nuclear receptor subfamily 2 group F member 2</fullName>
    </alternativeName>
</protein>
<evidence type="ECO:0000250" key="1"/>
<evidence type="ECO:0000250" key="2">
    <source>
        <dbReference type="UniProtKB" id="P24468"/>
    </source>
</evidence>
<evidence type="ECO:0000255" key="3">
    <source>
        <dbReference type="PROSITE-ProRule" id="PRU00407"/>
    </source>
</evidence>
<evidence type="ECO:0000255" key="4">
    <source>
        <dbReference type="PROSITE-ProRule" id="PRU01189"/>
    </source>
</evidence>
<evidence type="ECO:0000256" key="5">
    <source>
        <dbReference type="SAM" id="MobiDB-lite"/>
    </source>
</evidence>
<evidence type="ECO:0000269" key="6">
    <source>
    </source>
</evidence>
<evidence type="ECO:0000269" key="7">
    <source>
    </source>
</evidence>
<evidence type="ECO:0000269" key="8">
    <source>
    </source>
</evidence>
<evidence type="ECO:0000305" key="9"/>
<organism>
    <name type="scientific">Mus musculus</name>
    <name type="common">Mouse</name>
    <dbReference type="NCBI Taxonomy" id="10090"/>
    <lineage>
        <taxon>Eukaryota</taxon>
        <taxon>Metazoa</taxon>
        <taxon>Chordata</taxon>
        <taxon>Craniata</taxon>
        <taxon>Vertebrata</taxon>
        <taxon>Euteleostomi</taxon>
        <taxon>Mammalia</taxon>
        <taxon>Eutheria</taxon>
        <taxon>Euarchontoglires</taxon>
        <taxon>Glires</taxon>
        <taxon>Rodentia</taxon>
        <taxon>Myomorpha</taxon>
        <taxon>Muroidea</taxon>
        <taxon>Muridae</taxon>
        <taxon>Murinae</taxon>
        <taxon>Mus</taxon>
        <taxon>Mus</taxon>
    </lineage>
</organism>
<proteinExistence type="evidence at protein level"/>
<keyword id="KW-0010">Activator</keyword>
<keyword id="KW-0238">DNA-binding</keyword>
<keyword id="KW-0479">Metal-binding</keyword>
<keyword id="KW-0539">Nucleus</keyword>
<keyword id="KW-0597">Phosphoprotein</keyword>
<keyword id="KW-0675">Receptor</keyword>
<keyword id="KW-1185">Reference proteome</keyword>
<keyword id="KW-0804">Transcription</keyword>
<keyword id="KW-0805">Transcription regulation</keyword>
<keyword id="KW-0862">Zinc</keyword>
<keyword id="KW-0863">Zinc-finger</keyword>
<accession>P43135</accession>
<dbReference type="EMBL" id="X76653">
    <property type="protein sequence ID" value="CAA54096.1"/>
    <property type="molecule type" value="mRNA"/>
</dbReference>
<dbReference type="EMBL" id="U07635">
    <property type="protein sequence ID" value="AAA19854.1"/>
    <property type="molecule type" value="mRNA"/>
</dbReference>
<dbReference type="EMBL" id="BC042484">
    <property type="protein sequence ID" value="AAH42484.1"/>
    <property type="molecule type" value="mRNA"/>
</dbReference>
<dbReference type="CCDS" id="CCDS21359.1"/>
<dbReference type="RefSeq" id="NP_033827.2">
    <property type="nucleotide sequence ID" value="NM_009697.3"/>
</dbReference>
<dbReference type="SMR" id="P43135"/>
<dbReference type="BioGRID" id="198166">
    <property type="interactions" value="1"/>
</dbReference>
<dbReference type="FunCoup" id="P43135">
    <property type="interactions" value="3227"/>
</dbReference>
<dbReference type="IntAct" id="P43135">
    <property type="interactions" value="2"/>
</dbReference>
<dbReference type="MINT" id="P43135"/>
<dbReference type="STRING" id="10090.ENSMUSP00000032768"/>
<dbReference type="GlyGen" id="P43135">
    <property type="glycosylation" value="2 sites, 1 O-linked glycan (1 site)"/>
</dbReference>
<dbReference type="iPTMnet" id="P43135"/>
<dbReference type="PhosphoSitePlus" id="P43135"/>
<dbReference type="PaxDb" id="10090-ENSMUSP00000032768"/>
<dbReference type="PeptideAtlas" id="P43135"/>
<dbReference type="ProteomicsDB" id="283355"/>
<dbReference type="Pumba" id="P43135"/>
<dbReference type="Antibodypedia" id="16260">
    <property type="antibodies" value="313 antibodies from 34 providers"/>
</dbReference>
<dbReference type="DNASU" id="11819"/>
<dbReference type="Ensembl" id="ENSMUST00000032768.15">
    <property type="protein sequence ID" value="ENSMUSP00000032768.8"/>
    <property type="gene ID" value="ENSMUSG00000030551.15"/>
</dbReference>
<dbReference type="GeneID" id="11819"/>
<dbReference type="KEGG" id="mmu:11819"/>
<dbReference type="UCSC" id="uc009hni.1">
    <property type="organism name" value="mouse"/>
</dbReference>
<dbReference type="AGR" id="MGI:1352452"/>
<dbReference type="CTD" id="7026"/>
<dbReference type="MGI" id="MGI:1352452">
    <property type="gene designation" value="Nr2f2"/>
</dbReference>
<dbReference type="VEuPathDB" id="HostDB:ENSMUSG00000030551"/>
<dbReference type="eggNOG" id="KOG3575">
    <property type="taxonomic scope" value="Eukaryota"/>
</dbReference>
<dbReference type="GeneTree" id="ENSGT00940000157540"/>
<dbReference type="InParanoid" id="P43135"/>
<dbReference type="OMA" id="QHIECTV"/>
<dbReference type="OrthoDB" id="5873264at2759"/>
<dbReference type="PhylomeDB" id="P43135"/>
<dbReference type="TreeFam" id="TF352097"/>
<dbReference type="BioGRID-ORCS" id="11819">
    <property type="hits" value="8 hits in 81 CRISPR screens"/>
</dbReference>
<dbReference type="ChiTaRS" id="Nr2f2">
    <property type="organism name" value="mouse"/>
</dbReference>
<dbReference type="PRO" id="PR:P43135"/>
<dbReference type="Proteomes" id="UP000000589">
    <property type="component" value="Chromosome 7"/>
</dbReference>
<dbReference type="RNAct" id="P43135">
    <property type="molecule type" value="protein"/>
</dbReference>
<dbReference type="Bgee" id="ENSMUSG00000030551">
    <property type="expression patterns" value="Expressed in gonadal ridge and 319 other cell types or tissues"/>
</dbReference>
<dbReference type="ExpressionAtlas" id="P43135">
    <property type="expression patterns" value="baseline and differential"/>
</dbReference>
<dbReference type="GO" id="GO:0005829">
    <property type="term" value="C:cytosol"/>
    <property type="evidence" value="ECO:0007669"/>
    <property type="project" value="Ensembl"/>
</dbReference>
<dbReference type="GO" id="GO:0005654">
    <property type="term" value="C:nucleoplasm"/>
    <property type="evidence" value="ECO:0007669"/>
    <property type="project" value="Ensembl"/>
</dbReference>
<dbReference type="GO" id="GO:0005634">
    <property type="term" value="C:nucleus"/>
    <property type="evidence" value="ECO:0000314"/>
    <property type="project" value="MGI"/>
</dbReference>
<dbReference type="GO" id="GO:0003677">
    <property type="term" value="F:DNA binding"/>
    <property type="evidence" value="ECO:0000314"/>
    <property type="project" value="MGI"/>
</dbReference>
<dbReference type="GO" id="GO:0004879">
    <property type="term" value="F:nuclear receptor activity"/>
    <property type="evidence" value="ECO:0000250"/>
    <property type="project" value="UniProtKB"/>
</dbReference>
<dbReference type="GO" id="GO:0042803">
    <property type="term" value="F:protein homodimerization activity"/>
    <property type="evidence" value="ECO:0007669"/>
    <property type="project" value="Ensembl"/>
</dbReference>
<dbReference type="GO" id="GO:0001972">
    <property type="term" value="F:retinoic acid binding"/>
    <property type="evidence" value="ECO:0000250"/>
    <property type="project" value="UniProtKB"/>
</dbReference>
<dbReference type="GO" id="GO:0043565">
    <property type="term" value="F:sequence-specific DNA binding"/>
    <property type="evidence" value="ECO:0000314"/>
    <property type="project" value="MGI"/>
</dbReference>
<dbReference type="GO" id="GO:0008270">
    <property type="term" value="F:zinc ion binding"/>
    <property type="evidence" value="ECO:0007669"/>
    <property type="project" value="UniProtKB-KW"/>
</dbReference>
<dbReference type="GO" id="GO:0009952">
    <property type="term" value="P:anterior/posterior pattern specification"/>
    <property type="evidence" value="ECO:0000315"/>
    <property type="project" value="MGI"/>
</dbReference>
<dbReference type="GO" id="GO:0048514">
    <property type="term" value="P:blood vessel morphogenesis"/>
    <property type="evidence" value="ECO:0000315"/>
    <property type="project" value="MGI"/>
</dbReference>
<dbReference type="GO" id="GO:0008585">
    <property type="term" value="P:female gonad development"/>
    <property type="evidence" value="ECO:0000250"/>
    <property type="project" value="UniProtKB"/>
</dbReference>
<dbReference type="GO" id="GO:0009566">
    <property type="term" value="P:fertilization"/>
    <property type="evidence" value="ECO:0000315"/>
    <property type="project" value="MGI"/>
</dbReference>
<dbReference type="GO" id="GO:0030900">
    <property type="term" value="P:forebrain development"/>
    <property type="evidence" value="ECO:0000314"/>
    <property type="project" value="MGI"/>
</dbReference>
<dbReference type="GO" id="GO:0001701">
    <property type="term" value="P:in utero embryonic development"/>
    <property type="evidence" value="ECO:0000315"/>
    <property type="project" value="MGI"/>
</dbReference>
<dbReference type="GO" id="GO:1904936">
    <property type="term" value="P:interneuron migration"/>
    <property type="evidence" value="ECO:0000314"/>
    <property type="project" value="MGI"/>
</dbReference>
<dbReference type="GO" id="GO:0001945">
    <property type="term" value="P:lymph vessel development"/>
    <property type="evidence" value="ECO:0000270"/>
    <property type="project" value="BHF-UCL"/>
</dbReference>
<dbReference type="GO" id="GO:0060838">
    <property type="term" value="P:lymphatic endothelial cell fate commitment"/>
    <property type="evidence" value="ECO:0007669"/>
    <property type="project" value="Ensembl"/>
</dbReference>
<dbReference type="GO" id="GO:0001893">
    <property type="term" value="P:maternal placenta development"/>
    <property type="evidence" value="ECO:0000315"/>
    <property type="project" value="MGI"/>
</dbReference>
<dbReference type="GO" id="GO:0010596">
    <property type="term" value="P:negative regulation of endothelial cell migration"/>
    <property type="evidence" value="ECO:0007669"/>
    <property type="project" value="Ensembl"/>
</dbReference>
<dbReference type="GO" id="GO:0001937">
    <property type="term" value="P:negative regulation of endothelial cell proliferation"/>
    <property type="evidence" value="ECO:0007669"/>
    <property type="project" value="Ensembl"/>
</dbReference>
<dbReference type="GO" id="GO:0000122">
    <property type="term" value="P:negative regulation of transcription by RNA polymerase II"/>
    <property type="evidence" value="ECO:0000314"/>
    <property type="project" value="MGI"/>
</dbReference>
<dbReference type="GO" id="GO:0001764">
    <property type="term" value="P:neuron migration"/>
    <property type="evidence" value="ECO:0000314"/>
    <property type="project" value="MGI"/>
</dbReference>
<dbReference type="GO" id="GO:0060674">
    <property type="term" value="P:placenta blood vessel development"/>
    <property type="evidence" value="ECO:0000315"/>
    <property type="project" value="MGI"/>
</dbReference>
<dbReference type="GO" id="GO:0045893">
    <property type="term" value="P:positive regulation of DNA-templated transcription"/>
    <property type="evidence" value="ECO:0000250"/>
    <property type="project" value="UniProtKB"/>
</dbReference>
<dbReference type="GO" id="GO:0003084">
    <property type="term" value="P:positive regulation of systemic arterial blood pressure"/>
    <property type="evidence" value="ECO:0007669"/>
    <property type="project" value="Ensembl"/>
</dbReference>
<dbReference type="GO" id="GO:0045944">
    <property type="term" value="P:positive regulation of transcription by RNA polymerase II"/>
    <property type="evidence" value="ECO:0007669"/>
    <property type="project" value="Ensembl"/>
</dbReference>
<dbReference type="GO" id="GO:0009956">
    <property type="term" value="P:radial pattern formation"/>
    <property type="evidence" value="ECO:0000315"/>
    <property type="project" value="MGI"/>
</dbReference>
<dbReference type="GO" id="GO:0006357">
    <property type="term" value="P:regulation of transcription by RNA polymerase II"/>
    <property type="evidence" value="ECO:0000314"/>
    <property type="project" value="MGI"/>
</dbReference>
<dbReference type="GO" id="GO:0032355">
    <property type="term" value="P:response to estradiol"/>
    <property type="evidence" value="ECO:0007669"/>
    <property type="project" value="Ensembl"/>
</dbReference>
<dbReference type="GO" id="GO:0007519">
    <property type="term" value="P:skeletal muscle tissue development"/>
    <property type="evidence" value="ECO:0000315"/>
    <property type="project" value="MGI"/>
</dbReference>
<dbReference type="GO" id="GO:0060707">
    <property type="term" value="P:trophoblast giant cell differentiation"/>
    <property type="evidence" value="ECO:0000315"/>
    <property type="project" value="MGI"/>
</dbReference>
<dbReference type="CDD" id="cd06958">
    <property type="entry name" value="NR_DBD_COUP_TF"/>
    <property type="match status" value="1"/>
</dbReference>
<dbReference type="CDD" id="cd06948">
    <property type="entry name" value="NR_LBD_COUP-TF"/>
    <property type="match status" value="1"/>
</dbReference>
<dbReference type="FunFam" id="1.10.565.10:FF:000003">
    <property type="entry name" value="Coup transcription factor 2 isoform 1"/>
    <property type="match status" value="1"/>
</dbReference>
<dbReference type="FunFam" id="3.30.50.10:FF:000016">
    <property type="entry name" value="Nuclear receptor subfamily 2 group F member 1"/>
    <property type="match status" value="1"/>
</dbReference>
<dbReference type="Gene3D" id="3.30.50.10">
    <property type="entry name" value="Erythroid Transcription Factor GATA-1, subunit A"/>
    <property type="match status" value="1"/>
</dbReference>
<dbReference type="Gene3D" id="1.10.565.10">
    <property type="entry name" value="Retinoid X Receptor"/>
    <property type="match status" value="1"/>
</dbReference>
<dbReference type="InterPro" id="IPR035500">
    <property type="entry name" value="NHR-like_dom_sf"/>
</dbReference>
<dbReference type="InterPro" id="IPR000536">
    <property type="entry name" value="Nucl_hrmn_rcpt_lig-bd"/>
</dbReference>
<dbReference type="InterPro" id="IPR050274">
    <property type="entry name" value="Nuclear_hormone_rcpt_NR2"/>
</dbReference>
<dbReference type="InterPro" id="IPR001723">
    <property type="entry name" value="Nuclear_hrmn_rcpt"/>
</dbReference>
<dbReference type="InterPro" id="IPR001628">
    <property type="entry name" value="Znf_hrmn_rcpt"/>
</dbReference>
<dbReference type="InterPro" id="IPR013088">
    <property type="entry name" value="Znf_NHR/GATA"/>
</dbReference>
<dbReference type="PANTHER" id="PTHR24083">
    <property type="entry name" value="NUCLEAR HORMONE RECEPTOR"/>
    <property type="match status" value="1"/>
</dbReference>
<dbReference type="Pfam" id="PF00104">
    <property type="entry name" value="Hormone_recep"/>
    <property type="match status" value="1"/>
</dbReference>
<dbReference type="Pfam" id="PF00105">
    <property type="entry name" value="zf-C4"/>
    <property type="match status" value="1"/>
</dbReference>
<dbReference type="PRINTS" id="PR01282">
    <property type="entry name" value="COUPTNFACTOR"/>
</dbReference>
<dbReference type="PRINTS" id="PR00398">
    <property type="entry name" value="STRDHORMONER"/>
</dbReference>
<dbReference type="PRINTS" id="PR00047">
    <property type="entry name" value="STROIDFINGER"/>
</dbReference>
<dbReference type="SMART" id="SM00430">
    <property type="entry name" value="HOLI"/>
    <property type="match status" value="1"/>
</dbReference>
<dbReference type="SMART" id="SM00399">
    <property type="entry name" value="ZnF_C4"/>
    <property type="match status" value="1"/>
</dbReference>
<dbReference type="SUPFAM" id="SSF57716">
    <property type="entry name" value="Glucocorticoid receptor-like (DNA-binding domain)"/>
    <property type="match status" value="1"/>
</dbReference>
<dbReference type="SUPFAM" id="SSF48508">
    <property type="entry name" value="Nuclear receptor ligand-binding domain"/>
    <property type="match status" value="1"/>
</dbReference>
<dbReference type="PROSITE" id="PS51843">
    <property type="entry name" value="NR_LBD"/>
    <property type="match status" value="1"/>
</dbReference>
<dbReference type="PROSITE" id="PS00031">
    <property type="entry name" value="NUCLEAR_REC_DBD_1"/>
    <property type="match status" value="1"/>
</dbReference>
<dbReference type="PROSITE" id="PS51030">
    <property type="entry name" value="NUCLEAR_REC_DBD_2"/>
    <property type="match status" value="1"/>
</dbReference>
<name>COT2_MOUSE</name>
<comment type="function">
    <text evidence="2">Ligand-activated transcription factor. Activated by high concentrations of 9-cis-retinoic acid and all-trans-retinoic acid, but not by dexamethasone, cortisol or progesterone (in vitro). Regulation of the apolipoprotein A-I gene transcription. Binds to DNA site A. May be required to establish ovary identity during early gonad development.</text>
</comment>
<comment type="subunit">
    <text evidence="1 6">Interacts with SQSTM1. Binds DNA as a dimer; homodimer or heterodimer with NR2F6. Interacts with NCOA1, NCOA2, NCOA3 and PPARGC1A (By similarity). Interacts with ZFPM2.</text>
</comment>
<comment type="subcellular location">
    <subcellularLocation>
        <location evidence="8">Nucleus</location>
    </subcellularLocation>
</comment>
<comment type="developmental stage">
    <text evidence="7">Expression in venous vessels of the heart at 16.5 dpc.</text>
</comment>
<comment type="similarity">
    <text evidence="9">Belongs to the nuclear hormone receptor family. NR2 subfamily.</text>
</comment>
<sequence length="414" mass="45571">MAMVVSTWRDPQDEVPGSQGSQASQAPPVPGPPPGAPHTPQTPGQGGPASTPAQTAAGGQGGPGGPGSDKQQQQQHIECVVCGDKSSGKHYGQFTCEGCKSFFKRSVRRNLSYTCRANRNCPIDQHHRNQCQYCRLKKCLKVGMRREAVQRGRMPPTQPTHGQFALTNGDPLNCHSYLSGYISLLLRAEPYPTSRFGSQCMQPNNIMGIENICELAARMLFSAVEWARNIPFFPDLQITDQVALLRLTWSELFVLNAAQCSMPLHVAPLLAAAGLHASPMSADRVVAFMDHIRIFQEQVEKLKALHVDSAEYSCLKAIVLFTSDACGLSDVAHVESLQEKSQCALEEYVRSQYPNQPTRFGKLLLRLPSLRTVSSSVIEQLFFVRLVGKTPIETLIRDMLLSGSSFNWPYMAIQ</sequence>